<accession>Q8DS27</accession>
<name>RS8_STRMU</name>
<dbReference type="EMBL" id="AE014133">
    <property type="protein sequence ID" value="AAN59616.1"/>
    <property type="molecule type" value="Genomic_DNA"/>
</dbReference>
<dbReference type="RefSeq" id="NP_722310.1">
    <property type="nucleotide sequence ID" value="NC_004350.2"/>
</dbReference>
<dbReference type="RefSeq" id="WP_002352369.1">
    <property type="nucleotide sequence ID" value="NC_004350.2"/>
</dbReference>
<dbReference type="SMR" id="Q8DS27"/>
<dbReference type="STRING" id="210007.SMU_2012"/>
<dbReference type="KEGG" id="smu:SMU_2012"/>
<dbReference type="PATRIC" id="fig|210007.7.peg.1793"/>
<dbReference type="eggNOG" id="COG0096">
    <property type="taxonomic scope" value="Bacteria"/>
</dbReference>
<dbReference type="HOGENOM" id="CLU_098428_0_2_9"/>
<dbReference type="OrthoDB" id="9802617at2"/>
<dbReference type="PhylomeDB" id="Q8DS27"/>
<dbReference type="Proteomes" id="UP000002512">
    <property type="component" value="Chromosome"/>
</dbReference>
<dbReference type="GO" id="GO:1990904">
    <property type="term" value="C:ribonucleoprotein complex"/>
    <property type="evidence" value="ECO:0007669"/>
    <property type="project" value="UniProtKB-KW"/>
</dbReference>
<dbReference type="GO" id="GO:0005840">
    <property type="term" value="C:ribosome"/>
    <property type="evidence" value="ECO:0007669"/>
    <property type="project" value="UniProtKB-KW"/>
</dbReference>
<dbReference type="GO" id="GO:0019843">
    <property type="term" value="F:rRNA binding"/>
    <property type="evidence" value="ECO:0007669"/>
    <property type="project" value="UniProtKB-UniRule"/>
</dbReference>
<dbReference type="GO" id="GO:0003735">
    <property type="term" value="F:structural constituent of ribosome"/>
    <property type="evidence" value="ECO:0007669"/>
    <property type="project" value="InterPro"/>
</dbReference>
<dbReference type="GO" id="GO:0006412">
    <property type="term" value="P:translation"/>
    <property type="evidence" value="ECO:0007669"/>
    <property type="project" value="UniProtKB-UniRule"/>
</dbReference>
<dbReference type="FunFam" id="3.30.1370.30:FF:000002">
    <property type="entry name" value="30S ribosomal protein S8"/>
    <property type="match status" value="1"/>
</dbReference>
<dbReference type="FunFam" id="3.30.1490.10:FF:000001">
    <property type="entry name" value="30S ribosomal protein S8"/>
    <property type="match status" value="1"/>
</dbReference>
<dbReference type="Gene3D" id="3.30.1370.30">
    <property type="match status" value="1"/>
</dbReference>
<dbReference type="Gene3D" id="3.30.1490.10">
    <property type="match status" value="1"/>
</dbReference>
<dbReference type="HAMAP" id="MF_01302_B">
    <property type="entry name" value="Ribosomal_uS8_B"/>
    <property type="match status" value="1"/>
</dbReference>
<dbReference type="InterPro" id="IPR000630">
    <property type="entry name" value="Ribosomal_uS8"/>
</dbReference>
<dbReference type="InterPro" id="IPR047863">
    <property type="entry name" value="Ribosomal_uS8_CS"/>
</dbReference>
<dbReference type="InterPro" id="IPR035987">
    <property type="entry name" value="Ribosomal_uS8_sf"/>
</dbReference>
<dbReference type="NCBIfam" id="NF001109">
    <property type="entry name" value="PRK00136.1"/>
    <property type="match status" value="1"/>
</dbReference>
<dbReference type="PANTHER" id="PTHR11758">
    <property type="entry name" value="40S RIBOSOMAL PROTEIN S15A"/>
    <property type="match status" value="1"/>
</dbReference>
<dbReference type="Pfam" id="PF00410">
    <property type="entry name" value="Ribosomal_S8"/>
    <property type="match status" value="1"/>
</dbReference>
<dbReference type="SUPFAM" id="SSF56047">
    <property type="entry name" value="Ribosomal protein S8"/>
    <property type="match status" value="1"/>
</dbReference>
<dbReference type="PROSITE" id="PS00053">
    <property type="entry name" value="RIBOSOMAL_S8"/>
    <property type="match status" value="1"/>
</dbReference>
<comment type="function">
    <text evidence="1">One of the primary rRNA binding proteins, it binds directly to 16S rRNA central domain where it helps coordinate assembly of the platform of the 30S subunit.</text>
</comment>
<comment type="subunit">
    <text evidence="1">Part of the 30S ribosomal subunit. Contacts proteins S5 and S12.</text>
</comment>
<comment type="similarity">
    <text evidence="1">Belongs to the universal ribosomal protein uS8 family.</text>
</comment>
<organism>
    <name type="scientific">Streptococcus mutans serotype c (strain ATCC 700610 / UA159)</name>
    <dbReference type="NCBI Taxonomy" id="210007"/>
    <lineage>
        <taxon>Bacteria</taxon>
        <taxon>Bacillati</taxon>
        <taxon>Bacillota</taxon>
        <taxon>Bacilli</taxon>
        <taxon>Lactobacillales</taxon>
        <taxon>Streptococcaceae</taxon>
        <taxon>Streptococcus</taxon>
    </lineage>
</organism>
<feature type="chain" id="PRO_0000126495" description="Small ribosomal subunit protein uS8">
    <location>
        <begin position="1"/>
        <end position="132"/>
    </location>
</feature>
<gene>
    <name evidence="1" type="primary">rpsH</name>
    <name type="ordered locus">SMU_2012</name>
</gene>
<reference key="1">
    <citation type="journal article" date="2002" name="Proc. Natl. Acad. Sci. U.S.A.">
        <title>Genome sequence of Streptococcus mutans UA159, a cariogenic dental pathogen.</title>
        <authorList>
            <person name="Ajdic D.J."/>
            <person name="McShan W.M."/>
            <person name="McLaughlin R.E."/>
            <person name="Savic G."/>
            <person name="Chang J."/>
            <person name="Carson M.B."/>
            <person name="Primeaux C."/>
            <person name="Tian R."/>
            <person name="Kenton S."/>
            <person name="Jia H.G."/>
            <person name="Lin S.P."/>
            <person name="Qian Y."/>
            <person name="Li S."/>
            <person name="Zhu H."/>
            <person name="Najar F.Z."/>
            <person name="Lai H."/>
            <person name="White J."/>
            <person name="Roe B.A."/>
            <person name="Ferretti J.J."/>
        </authorList>
    </citation>
    <scope>NUCLEOTIDE SEQUENCE [LARGE SCALE GENOMIC DNA]</scope>
    <source>
        <strain>ATCC 700610 / UA159</strain>
    </source>
</reference>
<sequence>MVMTDPIADFLTRIRNANQANHSVVEAPASNIKRGIAEILKCEGFVKDVEVIEDDKQGIIRIFLKYGQNGERVITGLKRISKPGLRVYTKREDVPKVLNGLGIAIISTSEGLLTDREARQKNIGGEVITYVW</sequence>
<protein>
    <recommendedName>
        <fullName evidence="1">Small ribosomal subunit protein uS8</fullName>
    </recommendedName>
    <alternativeName>
        <fullName evidence="2">30S ribosomal protein S8</fullName>
    </alternativeName>
</protein>
<proteinExistence type="inferred from homology"/>
<keyword id="KW-1185">Reference proteome</keyword>
<keyword id="KW-0687">Ribonucleoprotein</keyword>
<keyword id="KW-0689">Ribosomal protein</keyword>
<keyword id="KW-0694">RNA-binding</keyword>
<keyword id="KW-0699">rRNA-binding</keyword>
<evidence type="ECO:0000255" key="1">
    <source>
        <dbReference type="HAMAP-Rule" id="MF_01302"/>
    </source>
</evidence>
<evidence type="ECO:0000305" key="2"/>